<comment type="function">
    <text evidence="1">Catalyzes the decarboxylation of four acetate groups of uroporphyrinogen-III to yield coproporphyrinogen-III.</text>
</comment>
<comment type="catalytic activity">
    <reaction evidence="1">
        <text>uroporphyrinogen III + 4 H(+) = coproporphyrinogen III + 4 CO2</text>
        <dbReference type="Rhea" id="RHEA:19865"/>
        <dbReference type="ChEBI" id="CHEBI:15378"/>
        <dbReference type="ChEBI" id="CHEBI:16526"/>
        <dbReference type="ChEBI" id="CHEBI:57308"/>
        <dbReference type="ChEBI" id="CHEBI:57309"/>
        <dbReference type="EC" id="4.1.1.37"/>
    </reaction>
</comment>
<comment type="pathway">
    <text evidence="1">Porphyrin-containing compound metabolism; protoporphyrin-IX biosynthesis; coproporphyrinogen-III from 5-aminolevulinate: step 4/4.</text>
</comment>
<comment type="subunit">
    <text evidence="1">Homodimer.</text>
</comment>
<comment type="subcellular location">
    <subcellularLocation>
        <location evidence="1">Cytoplasm</location>
    </subcellularLocation>
</comment>
<comment type="similarity">
    <text evidence="1">Belongs to the uroporphyrinogen decarboxylase family.</text>
</comment>
<name>DCUP_BURMS</name>
<organism>
    <name type="scientific">Burkholderia mallei (strain SAVP1)</name>
    <dbReference type="NCBI Taxonomy" id="320388"/>
    <lineage>
        <taxon>Bacteria</taxon>
        <taxon>Pseudomonadati</taxon>
        <taxon>Pseudomonadota</taxon>
        <taxon>Betaproteobacteria</taxon>
        <taxon>Burkholderiales</taxon>
        <taxon>Burkholderiaceae</taxon>
        <taxon>Burkholderia</taxon>
        <taxon>pseudomallei group</taxon>
    </lineage>
</organism>
<protein>
    <recommendedName>
        <fullName evidence="1">Uroporphyrinogen decarboxylase</fullName>
        <shortName evidence="1">UPD</shortName>
        <shortName evidence="1">URO-D</shortName>
        <ecNumber evidence="1">4.1.1.37</ecNumber>
    </recommendedName>
</protein>
<evidence type="ECO:0000255" key="1">
    <source>
        <dbReference type="HAMAP-Rule" id="MF_00218"/>
    </source>
</evidence>
<sequence length="364" mass="39458">MAQTLLNDTFLRALLREPTDYTPIWLMRQAGRYLPEYNATRARAGSFLGLAKQPDYATEVTLQPLERFPLDAAILFSDILTIPDAMGLGLDFAAGEGPKFAHPVRTEADVAKLAVPDIGATLGYVTDAVREIRRALTDGEGRQRVPLIGFSGSPWTLACYMVEGGGSDDFRTVKSMAYARPDLMHRILDVNAQAVAAYLNAQIEAGAQAVMIFDTWGGALADGGYQRFSLDYVRRVLAQLKREHDGARVPAIAFTKGGGLWLEELAATGVDAVGLDWTVNLGRARERVAGRVALQGNLDPTILFAPPEAIRAEARAVLDSYGNHPGHVFNLGHGISQFTPPEHVAELVDEVHRHSRAIRSGAGS</sequence>
<reference key="1">
    <citation type="journal article" date="2010" name="Genome Biol. Evol.">
        <title>Continuing evolution of Burkholderia mallei through genome reduction and large-scale rearrangements.</title>
        <authorList>
            <person name="Losada L."/>
            <person name="Ronning C.M."/>
            <person name="DeShazer D."/>
            <person name="Woods D."/>
            <person name="Fedorova N."/>
            <person name="Kim H.S."/>
            <person name="Shabalina S.A."/>
            <person name="Pearson T.R."/>
            <person name="Brinkac L."/>
            <person name="Tan P."/>
            <person name="Nandi T."/>
            <person name="Crabtree J."/>
            <person name="Badger J."/>
            <person name="Beckstrom-Sternberg S."/>
            <person name="Saqib M."/>
            <person name="Schutzer S.E."/>
            <person name="Keim P."/>
            <person name="Nierman W.C."/>
        </authorList>
    </citation>
    <scope>NUCLEOTIDE SEQUENCE [LARGE SCALE GENOMIC DNA]</scope>
    <source>
        <strain>SAVP1</strain>
    </source>
</reference>
<dbReference type="EC" id="4.1.1.37" evidence="1"/>
<dbReference type="EMBL" id="CP000526">
    <property type="protein sequence ID" value="ABM51490.1"/>
    <property type="molecule type" value="Genomic_DNA"/>
</dbReference>
<dbReference type="RefSeq" id="WP_004195837.1">
    <property type="nucleotide sequence ID" value="NC_008785.1"/>
</dbReference>
<dbReference type="SMR" id="A1V8S5"/>
<dbReference type="GeneID" id="92980634"/>
<dbReference type="KEGG" id="bmv:BMASAVP1_A3349"/>
<dbReference type="HOGENOM" id="CLU_040933_0_0_4"/>
<dbReference type="UniPathway" id="UPA00251">
    <property type="reaction ID" value="UER00321"/>
</dbReference>
<dbReference type="GO" id="GO:0005829">
    <property type="term" value="C:cytosol"/>
    <property type="evidence" value="ECO:0007669"/>
    <property type="project" value="TreeGrafter"/>
</dbReference>
<dbReference type="GO" id="GO:0004853">
    <property type="term" value="F:uroporphyrinogen decarboxylase activity"/>
    <property type="evidence" value="ECO:0007669"/>
    <property type="project" value="UniProtKB-UniRule"/>
</dbReference>
<dbReference type="GO" id="GO:0019353">
    <property type="term" value="P:protoporphyrinogen IX biosynthetic process from glutamate"/>
    <property type="evidence" value="ECO:0007669"/>
    <property type="project" value="TreeGrafter"/>
</dbReference>
<dbReference type="CDD" id="cd00717">
    <property type="entry name" value="URO-D"/>
    <property type="match status" value="1"/>
</dbReference>
<dbReference type="FunFam" id="3.20.20.210:FF:000001">
    <property type="entry name" value="Uroporphyrinogen decarboxylase"/>
    <property type="match status" value="1"/>
</dbReference>
<dbReference type="Gene3D" id="3.20.20.210">
    <property type="match status" value="1"/>
</dbReference>
<dbReference type="HAMAP" id="MF_00218">
    <property type="entry name" value="URO_D"/>
    <property type="match status" value="1"/>
</dbReference>
<dbReference type="InterPro" id="IPR038071">
    <property type="entry name" value="UROD/MetE-like_sf"/>
</dbReference>
<dbReference type="InterPro" id="IPR006361">
    <property type="entry name" value="Uroporphyrinogen_deCO2ase_HemE"/>
</dbReference>
<dbReference type="InterPro" id="IPR000257">
    <property type="entry name" value="Uroporphyrinogen_deCOase"/>
</dbReference>
<dbReference type="NCBIfam" id="TIGR01464">
    <property type="entry name" value="hemE"/>
    <property type="match status" value="1"/>
</dbReference>
<dbReference type="PANTHER" id="PTHR21091">
    <property type="entry name" value="METHYLTETRAHYDROFOLATE:HOMOCYSTEINE METHYLTRANSFERASE RELATED"/>
    <property type="match status" value="1"/>
</dbReference>
<dbReference type="PANTHER" id="PTHR21091:SF169">
    <property type="entry name" value="UROPORPHYRINOGEN DECARBOXYLASE"/>
    <property type="match status" value="1"/>
</dbReference>
<dbReference type="Pfam" id="PF01208">
    <property type="entry name" value="URO-D"/>
    <property type="match status" value="1"/>
</dbReference>
<dbReference type="SUPFAM" id="SSF51726">
    <property type="entry name" value="UROD/MetE-like"/>
    <property type="match status" value="1"/>
</dbReference>
<dbReference type="PROSITE" id="PS00906">
    <property type="entry name" value="UROD_1"/>
    <property type="match status" value="1"/>
</dbReference>
<dbReference type="PROSITE" id="PS00907">
    <property type="entry name" value="UROD_2"/>
    <property type="match status" value="1"/>
</dbReference>
<feature type="chain" id="PRO_1000023881" description="Uroporphyrinogen decarboxylase">
    <location>
        <begin position="1"/>
        <end position="364"/>
    </location>
</feature>
<feature type="binding site" evidence="1">
    <location>
        <begin position="28"/>
        <end position="32"/>
    </location>
    <ligand>
        <name>substrate</name>
    </ligand>
</feature>
<feature type="binding site" evidence="1">
    <location>
        <position position="78"/>
    </location>
    <ligand>
        <name>substrate</name>
    </ligand>
</feature>
<feature type="binding site" evidence="1">
    <location>
        <position position="160"/>
    </location>
    <ligand>
        <name>substrate</name>
    </ligand>
</feature>
<feature type="binding site" evidence="1">
    <location>
        <position position="215"/>
    </location>
    <ligand>
        <name>substrate</name>
    </ligand>
</feature>
<feature type="binding site" evidence="1">
    <location>
        <position position="333"/>
    </location>
    <ligand>
        <name>substrate</name>
    </ligand>
</feature>
<feature type="site" description="Transition state stabilizer" evidence="1">
    <location>
        <position position="78"/>
    </location>
</feature>
<accession>A1V8S5</accession>
<proteinExistence type="inferred from homology"/>
<keyword id="KW-0963">Cytoplasm</keyword>
<keyword id="KW-0210">Decarboxylase</keyword>
<keyword id="KW-0456">Lyase</keyword>
<keyword id="KW-0627">Porphyrin biosynthesis</keyword>
<gene>
    <name evidence="1" type="primary">hemE</name>
    <name type="ordered locus">BMASAVP1_A3349</name>
</gene>